<proteinExistence type="evidence at transcript level"/>
<gene>
    <name type="primary">TMEM184B</name>
</gene>
<reference key="1">
    <citation type="submission" date="2007-02" db="EMBL/GenBank/DDBJ databases">
        <authorList>
            <consortium name="NIH - Mammalian Gene Collection (MGC) project"/>
        </authorList>
    </citation>
    <scope>NUCLEOTIDE SEQUENCE [LARGE SCALE MRNA]</scope>
    <source>
        <strain>Hereford</strain>
        <tissue>Hippocampus</tissue>
    </source>
</reference>
<name>T184B_BOVIN</name>
<dbReference type="EMBL" id="BC133301">
    <property type="protein sequence ID" value="AAI33302.1"/>
    <property type="molecule type" value="mRNA"/>
</dbReference>
<dbReference type="RefSeq" id="NP_001074991.1">
    <property type="nucleotide sequence ID" value="NM_001081522.1"/>
</dbReference>
<dbReference type="FunCoup" id="A2VDL9">
    <property type="interactions" value="3228"/>
</dbReference>
<dbReference type="STRING" id="9913.ENSBTAP00000071917"/>
<dbReference type="PaxDb" id="9913-ENSBTAP00000012742"/>
<dbReference type="GeneID" id="514220"/>
<dbReference type="KEGG" id="bta:514220"/>
<dbReference type="CTD" id="25829"/>
<dbReference type="VEuPathDB" id="HostDB:ENSBTAG00000009668"/>
<dbReference type="eggNOG" id="KOG2641">
    <property type="taxonomic scope" value="Eukaryota"/>
</dbReference>
<dbReference type="HOGENOM" id="CLU_012923_3_0_1"/>
<dbReference type="InParanoid" id="A2VDL9"/>
<dbReference type="OrthoDB" id="5348404at2759"/>
<dbReference type="TreeFam" id="TF314160"/>
<dbReference type="Proteomes" id="UP000009136">
    <property type="component" value="Chromosome 5"/>
</dbReference>
<dbReference type="Bgee" id="ENSBTAG00000009668">
    <property type="expression patterns" value="Expressed in pigment epithelium of eye and 104 other cell types or tissues"/>
</dbReference>
<dbReference type="GO" id="GO:0016020">
    <property type="term" value="C:membrane"/>
    <property type="evidence" value="ECO:0000318"/>
    <property type="project" value="GO_Central"/>
</dbReference>
<dbReference type="GO" id="GO:0022857">
    <property type="term" value="F:transmembrane transporter activity"/>
    <property type="evidence" value="ECO:0000318"/>
    <property type="project" value="GO_Central"/>
</dbReference>
<dbReference type="InterPro" id="IPR005178">
    <property type="entry name" value="Ostalpha/TMEM184C"/>
</dbReference>
<dbReference type="PANTHER" id="PTHR23423">
    <property type="entry name" value="ORGANIC SOLUTE TRANSPORTER-RELATED"/>
    <property type="match status" value="1"/>
</dbReference>
<dbReference type="Pfam" id="PF03619">
    <property type="entry name" value="Solute_trans_a"/>
    <property type="match status" value="1"/>
</dbReference>
<dbReference type="SMART" id="SM01417">
    <property type="entry name" value="Solute_trans_a"/>
    <property type="match status" value="1"/>
</dbReference>
<feature type="chain" id="PRO_0000284949" description="Transmembrane protein 184B">
    <location>
        <begin position="1"/>
        <end position="407"/>
    </location>
</feature>
<feature type="transmembrane region" description="Helical" evidence="3">
    <location>
        <begin position="40"/>
        <end position="60"/>
    </location>
</feature>
<feature type="transmembrane region" description="Helical" evidence="3">
    <location>
        <begin position="84"/>
        <end position="104"/>
    </location>
</feature>
<feature type="transmembrane region" description="Helical" evidence="3">
    <location>
        <begin position="121"/>
        <end position="141"/>
    </location>
</feature>
<feature type="transmembrane region" description="Helical" evidence="3">
    <location>
        <begin position="178"/>
        <end position="198"/>
    </location>
</feature>
<feature type="transmembrane region" description="Helical" evidence="3">
    <location>
        <begin position="214"/>
        <end position="234"/>
    </location>
</feature>
<feature type="transmembrane region" description="Helical" evidence="3">
    <location>
        <begin position="249"/>
        <end position="269"/>
    </location>
</feature>
<feature type="transmembrane region" description="Helical" evidence="3">
    <location>
        <begin position="290"/>
        <end position="310"/>
    </location>
</feature>
<feature type="region of interest" description="Disordered" evidence="4">
    <location>
        <begin position="1"/>
        <end position="24"/>
    </location>
</feature>
<feature type="region of interest" description="Disordered" evidence="4">
    <location>
        <begin position="369"/>
        <end position="395"/>
    </location>
</feature>
<feature type="modified residue" description="Phosphoserine" evidence="2">
    <location>
        <position position="388"/>
    </location>
</feature>
<feature type="modified residue" description="Phosphoserine" evidence="2">
    <location>
        <position position="402"/>
    </location>
</feature>
<feature type="modified residue" description="Phosphoserine" evidence="2">
    <location>
        <position position="403"/>
    </location>
</feature>
<sequence>MTVRGAALAPDPASPTTAAASPSISVIPEGSPTAMEQPVFLMTTAAQAISGFFVWTALLITCHQIYMHLRCYSCPNEQRYIVRILFIVPIYAFDSWLSLLFFTNDQYYVYFGTVRDCYEALVIYNFLSLCYEYLGGESSIMSEIRGKPIESSCMYGTCCLWGKTYSIGFLRFCKQATLQFCVVKPLMAVSTVVLQAFGKYRDGDFDVTSGYLYVTIIYNISVSLALYALFLFYFATRELLSPYSPVLKFFMVKSVIFLSFWQGMLLAILEKCGAIPKIHSARVSVGEGTVAAGYQDFIICVEMFFAALALRHAFTYKVYADKRVDAQGRCAPMKSISSSLKETMNPHDIVQDAIHNFSPAYQQYTQQSTLEPGPTWRGGAHGLSRSHSLSGARDNEKTLLLSSDDEF</sequence>
<accession>A2VDL9</accession>
<protein>
    <recommendedName>
        <fullName>Transmembrane protein 184B</fullName>
    </recommendedName>
</protein>
<evidence type="ECO:0000250" key="1"/>
<evidence type="ECO:0000250" key="2">
    <source>
        <dbReference type="UniProtKB" id="Q9Y519"/>
    </source>
</evidence>
<evidence type="ECO:0000255" key="3"/>
<evidence type="ECO:0000256" key="4">
    <source>
        <dbReference type="SAM" id="MobiDB-lite"/>
    </source>
</evidence>
<evidence type="ECO:0000305" key="5"/>
<keyword id="KW-0472">Membrane</keyword>
<keyword id="KW-0597">Phosphoprotein</keyword>
<keyword id="KW-1185">Reference proteome</keyword>
<keyword id="KW-0812">Transmembrane</keyword>
<keyword id="KW-1133">Transmembrane helix</keyword>
<organism>
    <name type="scientific">Bos taurus</name>
    <name type="common">Bovine</name>
    <dbReference type="NCBI Taxonomy" id="9913"/>
    <lineage>
        <taxon>Eukaryota</taxon>
        <taxon>Metazoa</taxon>
        <taxon>Chordata</taxon>
        <taxon>Craniata</taxon>
        <taxon>Vertebrata</taxon>
        <taxon>Euteleostomi</taxon>
        <taxon>Mammalia</taxon>
        <taxon>Eutheria</taxon>
        <taxon>Laurasiatheria</taxon>
        <taxon>Artiodactyla</taxon>
        <taxon>Ruminantia</taxon>
        <taxon>Pecora</taxon>
        <taxon>Bovidae</taxon>
        <taxon>Bovinae</taxon>
        <taxon>Bos</taxon>
    </lineage>
</organism>
<comment type="function">
    <text evidence="1">May activate the MAP kinase signaling pathway.</text>
</comment>
<comment type="subcellular location">
    <subcellularLocation>
        <location evidence="5">Membrane</location>
        <topology evidence="5">Multi-pass membrane protein</topology>
    </subcellularLocation>
</comment>
<comment type="similarity">
    <text evidence="5">Belongs to the TMEM184 family.</text>
</comment>